<accession>A8I831</accession>
<keyword id="KW-0456">Lyase</keyword>
<keyword id="KW-0501">Molybdenum cofactor biosynthesis</keyword>
<keyword id="KW-1185">Reference proteome</keyword>
<sequence length="158" mass="16772">MTRLTHLDSTGAARMVDVSDKPSTTREALAEGQVVMAPETLALIQSGNAKKGDVLGVARIAGIMASKRTHELIPLCHPLMLSKVEVEVTPDEALPGLHVVARVKTAGQTGVEMEALTAVSVACLTIYDMAKAADRGMRIENIRLLEKSGGRSGDWRAA</sequence>
<organism>
    <name type="scientific">Azorhizobium caulinodans (strain ATCC 43989 / DSM 5975 / JCM 20966 / LMG 6465 / NBRC 14845 / NCIMB 13405 / ORS 571)</name>
    <dbReference type="NCBI Taxonomy" id="438753"/>
    <lineage>
        <taxon>Bacteria</taxon>
        <taxon>Pseudomonadati</taxon>
        <taxon>Pseudomonadota</taxon>
        <taxon>Alphaproteobacteria</taxon>
        <taxon>Hyphomicrobiales</taxon>
        <taxon>Xanthobacteraceae</taxon>
        <taxon>Azorhizobium</taxon>
    </lineage>
</organism>
<protein>
    <recommendedName>
        <fullName evidence="1">Cyclic pyranopterin monophosphate synthase</fullName>
        <ecNumber evidence="1">4.6.1.17</ecNumber>
    </recommendedName>
    <alternativeName>
        <fullName evidence="1">Molybdenum cofactor biosynthesis protein C</fullName>
    </alternativeName>
</protein>
<name>MOAC_AZOC5</name>
<proteinExistence type="inferred from homology"/>
<dbReference type="EC" id="4.6.1.17" evidence="1"/>
<dbReference type="EMBL" id="AP009384">
    <property type="protein sequence ID" value="BAF88201.1"/>
    <property type="molecule type" value="Genomic_DNA"/>
</dbReference>
<dbReference type="RefSeq" id="WP_012170730.1">
    <property type="nucleotide sequence ID" value="NC_009937.1"/>
</dbReference>
<dbReference type="SMR" id="A8I831"/>
<dbReference type="STRING" id="438753.AZC_2203"/>
<dbReference type="KEGG" id="azc:AZC_2203"/>
<dbReference type="eggNOG" id="COG0315">
    <property type="taxonomic scope" value="Bacteria"/>
</dbReference>
<dbReference type="HOGENOM" id="CLU_074693_1_0_5"/>
<dbReference type="UniPathway" id="UPA00344"/>
<dbReference type="Proteomes" id="UP000000270">
    <property type="component" value="Chromosome"/>
</dbReference>
<dbReference type="GO" id="GO:0061799">
    <property type="term" value="F:cyclic pyranopterin monophosphate synthase activity"/>
    <property type="evidence" value="ECO:0007669"/>
    <property type="project" value="UniProtKB-UniRule"/>
</dbReference>
<dbReference type="GO" id="GO:0006777">
    <property type="term" value="P:Mo-molybdopterin cofactor biosynthetic process"/>
    <property type="evidence" value="ECO:0007669"/>
    <property type="project" value="UniProtKB-UniRule"/>
</dbReference>
<dbReference type="CDD" id="cd01420">
    <property type="entry name" value="MoaC_PE"/>
    <property type="match status" value="1"/>
</dbReference>
<dbReference type="Gene3D" id="3.30.70.640">
    <property type="entry name" value="Molybdopterin cofactor biosynthesis C (MoaC) domain"/>
    <property type="match status" value="1"/>
</dbReference>
<dbReference type="HAMAP" id="MF_01224_B">
    <property type="entry name" value="MoaC_B"/>
    <property type="match status" value="1"/>
</dbReference>
<dbReference type="InterPro" id="IPR023045">
    <property type="entry name" value="MoaC"/>
</dbReference>
<dbReference type="InterPro" id="IPR047594">
    <property type="entry name" value="MoaC_bact/euk"/>
</dbReference>
<dbReference type="InterPro" id="IPR036522">
    <property type="entry name" value="MoaC_sf"/>
</dbReference>
<dbReference type="InterPro" id="IPR050105">
    <property type="entry name" value="MoCo_biosynth_MoaA/MoaC"/>
</dbReference>
<dbReference type="InterPro" id="IPR002820">
    <property type="entry name" value="Mopterin_CF_biosynth-C_dom"/>
</dbReference>
<dbReference type="NCBIfam" id="TIGR00581">
    <property type="entry name" value="moaC"/>
    <property type="match status" value="1"/>
</dbReference>
<dbReference type="NCBIfam" id="NF006870">
    <property type="entry name" value="PRK09364.1"/>
    <property type="match status" value="1"/>
</dbReference>
<dbReference type="PANTHER" id="PTHR22960:SF29">
    <property type="entry name" value="CYCLIC PYRANOPTERIN MONOPHOSPHATE SYNTHASE"/>
    <property type="match status" value="1"/>
</dbReference>
<dbReference type="PANTHER" id="PTHR22960">
    <property type="entry name" value="MOLYBDOPTERIN COFACTOR SYNTHESIS PROTEIN A"/>
    <property type="match status" value="1"/>
</dbReference>
<dbReference type="Pfam" id="PF01967">
    <property type="entry name" value="MoaC"/>
    <property type="match status" value="1"/>
</dbReference>
<dbReference type="SUPFAM" id="SSF55040">
    <property type="entry name" value="Molybdenum cofactor biosynthesis protein C, MoaC"/>
    <property type="match status" value="1"/>
</dbReference>
<evidence type="ECO:0000255" key="1">
    <source>
        <dbReference type="HAMAP-Rule" id="MF_01224"/>
    </source>
</evidence>
<gene>
    <name evidence="1" type="primary">moaC</name>
    <name type="ordered locus">AZC_2203</name>
</gene>
<feature type="chain" id="PRO_1000073152" description="Cyclic pyranopterin monophosphate synthase">
    <location>
        <begin position="1"/>
        <end position="158"/>
    </location>
</feature>
<feature type="active site" evidence="1">
    <location>
        <position position="128"/>
    </location>
</feature>
<feature type="binding site" evidence="1">
    <location>
        <begin position="75"/>
        <end position="77"/>
    </location>
    <ligand>
        <name>substrate</name>
    </ligand>
</feature>
<feature type="binding site" evidence="1">
    <location>
        <begin position="113"/>
        <end position="114"/>
    </location>
    <ligand>
        <name>substrate</name>
    </ligand>
</feature>
<comment type="function">
    <text evidence="1">Catalyzes the conversion of (8S)-3',8-cyclo-7,8-dihydroguanosine 5'-triphosphate to cyclic pyranopterin monophosphate (cPMP).</text>
</comment>
<comment type="catalytic activity">
    <reaction evidence="1">
        <text>(8S)-3',8-cyclo-7,8-dihydroguanosine 5'-triphosphate = cyclic pyranopterin phosphate + diphosphate</text>
        <dbReference type="Rhea" id="RHEA:49580"/>
        <dbReference type="ChEBI" id="CHEBI:33019"/>
        <dbReference type="ChEBI" id="CHEBI:59648"/>
        <dbReference type="ChEBI" id="CHEBI:131766"/>
        <dbReference type="EC" id="4.6.1.17"/>
    </reaction>
</comment>
<comment type="pathway">
    <text evidence="1">Cofactor biosynthesis; molybdopterin biosynthesis.</text>
</comment>
<comment type="subunit">
    <text evidence="1">Homohexamer; trimer of dimers.</text>
</comment>
<comment type="similarity">
    <text evidence="1">Belongs to the MoaC family.</text>
</comment>
<reference key="1">
    <citation type="submission" date="2007-04" db="EMBL/GenBank/DDBJ databases">
        <title>Complete genome sequence of the nitrogen-fixing bacterium Azorhizobium caulinodans ORS571.</title>
        <authorList>
            <person name="Lee K.B."/>
            <person name="Backer P.D."/>
            <person name="Aono T."/>
            <person name="Liu C.T."/>
            <person name="Suzuki S."/>
            <person name="Suzuki T."/>
            <person name="Kaneko T."/>
            <person name="Yamada M."/>
            <person name="Tabata S."/>
            <person name="Kupfer D.M."/>
            <person name="Najar F.Z."/>
            <person name="Wiley G.B."/>
            <person name="Roe B."/>
            <person name="Binnewies T."/>
            <person name="Ussery D."/>
            <person name="Vereecke D."/>
            <person name="Gevers D."/>
            <person name="Holsters M."/>
            <person name="Oyaizu H."/>
        </authorList>
    </citation>
    <scope>NUCLEOTIDE SEQUENCE [LARGE SCALE GENOMIC DNA]</scope>
    <source>
        <strain>ATCC 43989 / DSM 5975 / JCM 20966 / LMG 6465 / NBRC 14845 / NCIMB 13405 / ORS 571</strain>
    </source>
</reference>